<accession>A0A1Q9P359</accession>
<evidence type="ECO:0000269" key="1">
    <source>
    </source>
</evidence>
<evidence type="ECO:0000303" key="2">
    <source>
    </source>
</evidence>
<evidence type="ECO:0000305" key="3"/>
<evidence type="ECO:0000305" key="4">
    <source>
    </source>
</evidence>
<feature type="chain" id="PRO_0000450552" description="Heimdall profilin">
    <location>
        <begin position="1"/>
        <end position="121"/>
    </location>
</feature>
<dbReference type="EMBL" id="MDVR01000008">
    <property type="protein sequence ID" value="OLS28802.1"/>
    <property type="molecule type" value="Genomic_DNA"/>
</dbReference>
<dbReference type="SMR" id="A0A1Q9P359"/>
<dbReference type="Proteomes" id="UP000186209">
    <property type="component" value="Unassembled WGS sequence"/>
</dbReference>
<dbReference type="GO" id="GO:0005737">
    <property type="term" value="C:cytoplasm"/>
    <property type="evidence" value="ECO:0007669"/>
    <property type="project" value="UniProtKB-KW"/>
</dbReference>
<dbReference type="GO" id="GO:0005856">
    <property type="term" value="C:cytoskeleton"/>
    <property type="evidence" value="ECO:0007669"/>
    <property type="project" value="UniProtKB-SubCell"/>
</dbReference>
<dbReference type="GO" id="GO:0003779">
    <property type="term" value="F:actin binding"/>
    <property type="evidence" value="ECO:0007669"/>
    <property type="project" value="UniProtKB-KW"/>
</dbReference>
<dbReference type="InterPro" id="IPR036140">
    <property type="entry name" value="PFN_sf"/>
</dbReference>
<dbReference type="SUPFAM" id="SSF55770">
    <property type="entry name" value="Profilin (actin-binding protein)"/>
    <property type="match status" value="1"/>
</dbReference>
<comment type="function">
    <text evidence="1">Binds to actin and affects the structure of the cytoskeleton. At high concentrations inhibits spontaneous rabbit actin nucleation. This strongly suggests this archaea has a profilin-regulated actin system, and actin-type genes can be identified in this organism.</text>
</comment>
<comment type="subcellular location">
    <subcellularLocation>
        <location evidence="4">Cytoplasm</location>
        <location evidence="4">Cytoskeleton</location>
    </subcellularLocation>
</comment>
<comment type="similarity">
    <text evidence="3">Belongs to the Asgard profilin family.</text>
</comment>
<name>PROF_HEILC</name>
<keyword id="KW-0009">Actin-binding</keyword>
<keyword id="KW-0963">Cytoplasm</keyword>
<keyword id="KW-0206">Cytoskeleton</keyword>
<sequence length="121" mass="12905">MSFNDKAAEAVASGDIGVGWLLSDQCEVFWNVGSWEGANPCEILTEWKKSAMTPITIAGLKFTIIGKTPERLVSTNIGGQGHIVGAKCTNYPGYLVCWCPATVGPNIAYSVIQKLADLVKA</sequence>
<organism>
    <name type="scientific">Heimdallarchaeota archaeon (strain LC_2)</name>
    <dbReference type="NCBI Taxonomy" id="1841597"/>
    <lineage>
        <taxon>Archaea</taxon>
        <taxon>Promethearchaeati</taxon>
        <taxon>Candidatus Heimdallarchaeota</taxon>
    </lineage>
</organism>
<proteinExistence type="inferred from homology"/>
<gene>
    <name type="ORF">HeimC2_04030</name>
</gene>
<reference key="1">
    <citation type="journal article" date="2017" name="Nature">
        <title>Asgard archaea illuminate the origin of eukaryotic cellular complexity.</title>
        <authorList>
            <person name="Zaremba-Niedzwiedzka K."/>
            <person name="Caceres E.F."/>
            <person name="Saw J.H."/>
            <person name="Backstrom D."/>
            <person name="Juzokaite L."/>
            <person name="Vancaester E."/>
            <person name="Seitz K.W."/>
            <person name="Anantharaman K."/>
            <person name="Starnawski P."/>
            <person name="Kjeldsen K.U."/>
            <person name="Stott M.B."/>
            <person name="Nunoura T."/>
            <person name="Banfield J.F."/>
            <person name="Schramm A."/>
            <person name="Baker B.J."/>
            <person name="Spang A."/>
            <person name="Ettema T.J.G."/>
        </authorList>
    </citation>
    <scope>NUCLEOTIDE SEQUENCE [LARGE SCALE GENOMIC DNA]</scope>
    <source>
        <strain>LC_2</strain>
    </source>
</reference>
<reference key="2">
    <citation type="journal article" date="2018" name="Nature">
        <title>Genomes of Asgard archaea encode profilins that regulate actin.</title>
        <authorList>
            <person name="Akil C."/>
            <person name="Robinson R.C."/>
        </authorList>
    </citation>
    <scope>FUNCTION</scope>
    <scope>SUBCELLULAR LOCATION</scope>
</reference>
<protein>
    <recommendedName>
        <fullName evidence="2">Heimdall profilin</fullName>
    </recommendedName>
</protein>